<feature type="chain" id="PRO_0000173351" description="Multidrug resistance protein MdtH">
    <location>
        <begin position="1"/>
        <end position="402"/>
    </location>
</feature>
<feature type="topological domain" description="Cytoplasmic" evidence="1">
    <location>
        <begin position="1"/>
        <end position="12"/>
    </location>
</feature>
<feature type="transmembrane region" description="Helical" evidence="1">
    <location>
        <begin position="13"/>
        <end position="33"/>
    </location>
</feature>
<feature type="topological domain" description="Periplasmic" evidence="1">
    <location>
        <begin position="34"/>
        <end position="98"/>
    </location>
</feature>
<feature type="transmembrane region" description="Helical" evidence="1">
    <location>
        <begin position="99"/>
        <end position="116"/>
    </location>
</feature>
<feature type="topological domain" description="Cytoplasmic" evidence="1">
    <location>
        <begin position="117"/>
        <end position="138"/>
    </location>
</feature>
<feature type="transmembrane region" description="Helical" evidence="1">
    <location>
        <begin position="139"/>
        <end position="159"/>
    </location>
</feature>
<feature type="topological domain" description="Periplasmic" evidence="1">
    <location>
        <begin position="160"/>
        <end position="164"/>
    </location>
</feature>
<feature type="transmembrane region" description="Helical" evidence="1">
    <location>
        <begin position="165"/>
        <end position="185"/>
    </location>
</feature>
<feature type="topological domain" description="Cytoplasmic" evidence="1">
    <location>
        <begin position="186"/>
        <end position="213"/>
    </location>
</feature>
<feature type="transmembrane region" description="Helical" evidence="1">
    <location>
        <begin position="214"/>
        <end position="234"/>
    </location>
</feature>
<feature type="topological domain" description="Periplasmic" evidence="1">
    <location>
        <begin position="235"/>
        <end position="243"/>
    </location>
</feature>
<feature type="transmembrane region" description="Helical" evidence="1">
    <location>
        <begin position="244"/>
        <end position="264"/>
    </location>
</feature>
<feature type="topological domain" description="Cytoplasmic" evidence="1">
    <location>
        <begin position="265"/>
        <end position="276"/>
    </location>
</feature>
<feature type="transmembrane region" description="Helical" evidence="1">
    <location>
        <begin position="277"/>
        <end position="297"/>
    </location>
</feature>
<feature type="topological domain" description="Periplasmic" evidence="1">
    <location>
        <begin position="298"/>
        <end position="299"/>
    </location>
</feature>
<feature type="transmembrane region" description="Helical" evidence="1">
    <location>
        <begin position="300"/>
        <end position="320"/>
    </location>
</feature>
<feature type="topological domain" description="Cytoplasmic" evidence="1">
    <location>
        <begin position="321"/>
        <end position="339"/>
    </location>
</feature>
<feature type="transmembrane region" description="Helical" evidence="1">
    <location>
        <begin position="340"/>
        <end position="360"/>
    </location>
</feature>
<feature type="topological domain" description="Periplasmic" evidence="1">
    <location>
        <begin position="361"/>
        <end position="367"/>
    </location>
</feature>
<feature type="transmembrane region" description="Helical" evidence="1">
    <location>
        <begin position="368"/>
        <end position="388"/>
    </location>
</feature>
<feature type="topological domain" description="Cytoplasmic" evidence="1">
    <location>
        <begin position="389"/>
        <end position="402"/>
    </location>
</feature>
<reference key="1">
    <citation type="journal article" date="2002" name="Nucleic Acids Res.">
        <title>Genome sequence of Shigella flexneri 2a: insights into pathogenicity through comparison with genomes of Escherichia coli K12 and O157.</title>
        <authorList>
            <person name="Jin Q."/>
            <person name="Yuan Z."/>
            <person name="Xu J."/>
            <person name="Wang Y."/>
            <person name="Shen Y."/>
            <person name="Lu W."/>
            <person name="Wang J."/>
            <person name="Liu H."/>
            <person name="Yang J."/>
            <person name="Yang F."/>
            <person name="Zhang X."/>
            <person name="Zhang J."/>
            <person name="Yang G."/>
            <person name="Wu H."/>
            <person name="Qu D."/>
            <person name="Dong J."/>
            <person name="Sun L."/>
            <person name="Xue Y."/>
            <person name="Zhao A."/>
            <person name="Gao Y."/>
            <person name="Zhu J."/>
            <person name="Kan B."/>
            <person name="Ding K."/>
            <person name="Chen S."/>
            <person name="Cheng H."/>
            <person name="Yao Z."/>
            <person name="He B."/>
            <person name="Chen R."/>
            <person name="Ma D."/>
            <person name="Qiang B."/>
            <person name="Wen Y."/>
            <person name="Hou Y."/>
            <person name="Yu J."/>
        </authorList>
    </citation>
    <scope>NUCLEOTIDE SEQUENCE [LARGE SCALE GENOMIC DNA]</scope>
    <source>
        <strain>301 / Serotype 2a</strain>
    </source>
</reference>
<reference key="2">
    <citation type="journal article" date="2003" name="Infect. Immun.">
        <title>Complete genome sequence and comparative genomics of Shigella flexneri serotype 2a strain 2457T.</title>
        <authorList>
            <person name="Wei J."/>
            <person name="Goldberg M.B."/>
            <person name="Burland V."/>
            <person name="Venkatesan M.M."/>
            <person name="Deng W."/>
            <person name="Fournier G."/>
            <person name="Mayhew G.F."/>
            <person name="Plunkett G. III"/>
            <person name="Rose D.J."/>
            <person name="Darling A."/>
            <person name="Mau B."/>
            <person name="Perna N.T."/>
            <person name="Payne S.M."/>
            <person name="Runyen-Janecky L.J."/>
            <person name="Zhou S."/>
            <person name="Schwartz D.C."/>
            <person name="Blattner F.R."/>
        </authorList>
    </citation>
    <scope>NUCLEOTIDE SEQUENCE [LARGE SCALE GENOMIC DNA]</scope>
    <source>
        <strain>ATCC 700930 / 2457T / Serotype 2a</strain>
    </source>
</reference>
<proteinExistence type="inferred from homology"/>
<accession>Q83LI8</accession>
<accession>Q7UCX4</accession>
<sequence length="402" mass="44393">MSRVSQARNLGKYFLLIDNMLVVLGFFVVFPLISIRFVDQMGWAAVMVGIALGLRQFIQQGLGIFGGAIADRFGAKPMIVTGMLMRAAGFATMGIAHEPWLLWFSCLLSGLGGTLFDPPRSALVVKLIRPQQRGRFFSLLMMQDSASAVIGALLGSWLLQYDFRLVCATGAVLFVLCAAFNAWLLPAWKLSTVRTPVREGMTRVMRDKRFVTYVLTLAGYYMLAVQVMLMLPIMVNDVAGAPSAVKWMYAIEACLSLTLLYPIARWSEKHFRLEHRLMAGLLIMSLSMMPVGMVSGLQQLFTLICLFYIGSIIAEPARETLSASLADARARGSYMGFSRLGLAIGGAIGYIGGGWLFDLGKSAHQPELPWMMLGIIGIFTFLALGWQFSQKRAARRLLERDA</sequence>
<gene>
    <name evidence="1" type="primary">mdtH</name>
    <name type="ordered locus">SF1071</name>
    <name type="ordered locus">S1149</name>
</gene>
<keyword id="KW-0997">Cell inner membrane</keyword>
<keyword id="KW-1003">Cell membrane</keyword>
<keyword id="KW-0472">Membrane</keyword>
<keyword id="KW-1185">Reference proteome</keyword>
<keyword id="KW-0812">Transmembrane</keyword>
<keyword id="KW-1133">Transmembrane helix</keyword>
<keyword id="KW-0813">Transport</keyword>
<dbReference type="EMBL" id="AE005674">
    <property type="protein sequence ID" value="AAN42693.2"/>
    <property type="molecule type" value="Genomic_DNA"/>
</dbReference>
<dbReference type="EMBL" id="AE014073">
    <property type="protein sequence ID" value="AAP16580.1"/>
    <property type="molecule type" value="Genomic_DNA"/>
</dbReference>
<dbReference type="RefSeq" id="WP_000092218.1">
    <property type="nucleotide sequence ID" value="NZ_WPGW01000001.1"/>
</dbReference>
<dbReference type="SMR" id="Q83LI8"/>
<dbReference type="STRING" id="198214.SF1071"/>
<dbReference type="PaxDb" id="198214-SF1071"/>
<dbReference type="KEGG" id="sfl:SF1071"/>
<dbReference type="KEGG" id="sfx:S1149"/>
<dbReference type="PATRIC" id="fig|198214.7.peg.1254"/>
<dbReference type="HOGENOM" id="CLU_001265_60_2_6"/>
<dbReference type="Proteomes" id="UP000001006">
    <property type="component" value="Chromosome"/>
</dbReference>
<dbReference type="Proteomes" id="UP000002673">
    <property type="component" value="Chromosome"/>
</dbReference>
<dbReference type="GO" id="GO:0005886">
    <property type="term" value="C:plasma membrane"/>
    <property type="evidence" value="ECO:0007669"/>
    <property type="project" value="UniProtKB-SubCell"/>
</dbReference>
<dbReference type="GO" id="GO:0022857">
    <property type="term" value="F:transmembrane transporter activity"/>
    <property type="evidence" value="ECO:0007669"/>
    <property type="project" value="UniProtKB-UniRule"/>
</dbReference>
<dbReference type="CDD" id="cd17329">
    <property type="entry name" value="MFS_MdtH_MDR_like"/>
    <property type="match status" value="1"/>
</dbReference>
<dbReference type="FunFam" id="1.20.1250.20:FF:000039">
    <property type="entry name" value="Multidrug resistance protein MdtH"/>
    <property type="match status" value="1"/>
</dbReference>
<dbReference type="Gene3D" id="1.20.1250.20">
    <property type="entry name" value="MFS general substrate transporter like domains"/>
    <property type="match status" value="1"/>
</dbReference>
<dbReference type="HAMAP" id="MF_01529">
    <property type="entry name" value="MFS_MdtH"/>
    <property type="match status" value="1"/>
</dbReference>
<dbReference type="InterPro" id="IPR011701">
    <property type="entry name" value="MFS"/>
</dbReference>
<dbReference type="InterPro" id="IPR020846">
    <property type="entry name" value="MFS_dom"/>
</dbReference>
<dbReference type="InterPro" id="IPR036259">
    <property type="entry name" value="MFS_trans_sf"/>
</dbReference>
<dbReference type="InterPro" id="IPR050171">
    <property type="entry name" value="MFS_Transporters"/>
</dbReference>
<dbReference type="InterPro" id="IPR022855">
    <property type="entry name" value="Multidrug-R_MdtH"/>
</dbReference>
<dbReference type="NCBIfam" id="NF008650">
    <property type="entry name" value="PRK11646.1"/>
    <property type="match status" value="1"/>
</dbReference>
<dbReference type="PANTHER" id="PTHR23517:SF2">
    <property type="entry name" value="MULTIDRUG RESISTANCE PROTEIN MDTH"/>
    <property type="match status" value="1"/>
</dbReference>
<dbReference type="PANTHER" id="PTHR23517">
    <property type="entry name" value="RESISTANCE PROTEIN MDTM, PUTATIVE-RELATED-RELATED"/>
    <property type="match status" value="1"/>
</dbReference>
<dbReference type="Pfam" id="PF07690">
    <property type="entry name" value="MFS_1"/>
    <property type="match status" value="1"/>
</dbReference>
<dbReference type="SUPFAM" id="SSF103473">
    <property type="entry name" value="MFS general substrate transporter"/>
    <property type="match status" value="1"/>
</dbReference>
<dbReference type="PROSITE" id="PS50850">
    <property type="entry name" value="MFS"/>
    <property type="match status" value="1"/>
</dbReference>
<protein>
    <recommendedName>
        <fullName evidence="1">Multidrug resistance protein MdtH</fullName>
    </recommendedName>
</protein>
<name>MDTH_SHIFL</name>
<evidence type="ECO:0000255" key="1">
    <source>
        <dbReference type="HAMAP-Rule" id="MF_01529"/>
    </source>
</evidence>
<organism>
    <name type="scientific">Shigella flexneri</name>
    <dbReference type="NCBI Taxonomy" id="623"/>
    <lineage>
        <taxon>Bacteria</taxon>
        <taxon>Pseudomonadati</taxon>
        <taxon>Pseudomonadota</taxon>
        <taxon>Gammaproteobacteria</taxon>
        <taxon>Enterobacterales</taxon>
        <taxon>Enterobacteriaceae</taxon>
        <taxon>Shigella</taxon>
    </lineage>
</organism>
<comment type="subcellular location">
    <subcellularLocation>
        <location evidence="1">Cell inner membrane</location>
        <topology evidence="1">Multi-pass membrane protein</topology>
    </subcellularLocation>
</comment>
<comment type="similarity">
    <text evidence="1">Belongs to the major facilitator superfamily. DHA1 family. MdtH (TC 2.A.1.2.21) subfamily.</text>
</comment>